<dbReference type="EC" id="4.3.3.6" evidence="1"/>
<dbReference type="EMBL" id="L42023">
    <property type="protein sequence ID" value="AAC23294.1"/>
    <property type="molecule type" value="Genomic_DNA"/>
</dbReference>
<dbReference type="PIR" id="F64173">
    <property type="entry name" value="F64173"/>
</dbReference>
<dbReference type="RefSeq" id="NP_439789.1">
    <property type="nucleotide sequence ID" value="NC_000907.1"/>
</dbReference>
<dbReference type="SMR" id="P45293"/>
<dbReference type="STRING" id="71421.HI_1647"/>
<dbReference type="EnsemblBacteria" id="AAC23294">
    <property type="protein sequence ID" value="AAC23294"/>
    <property type="gene ID" value="HI_1647"/>
</dbReference>
<dbReference type="KEGG" id="hin:HI_1647"/>
<dbReference type="PATRIC" id="fig|71421.8.peg.1723"/>
<dbReference type="eggNOG" id="COG0214">
    <property type="taxonomic scope" value="Bacteria"/>
</dbReference>
<dbReference type="HOGENOM" id="CLU_055352_1_0_6"/>
<dbReference type="OrthoDB" id="9772545at2"/>
<dbReference type="PhylomeDB" id="P45293"/>
<dbReference type="BioCyc" id="HINF71421:G1GJ1-1664-MONOMER"/>
<dbReference type="UniPathway" id="UPA00245"/>
<dbReference type="Proteomes" id="UP000000579">
    <property type="component" value="Chromosome"/>
</dbReference>
<dbReference type="GO" id="GO:0016843">
    <property type="term" value="F:amine-lyase activity"/>
    <property type="evidence" value="ECO:0000318"/>
    <property type="project" value="GO_Central"/>
</dbReference>
<dbReference type="GO" id="GO:0036381">
    <property type="term" value="F:pyridoxal 5'-phosphate synthase (glutamine hydrolysing) activity"/>
    <property type="evidence" value="ECO:0007669"/>
    <property type="project" value="UniProtKB-UniRule"/>
</dbReference>
<dbReference type="GO" id="GO:0006520">
    <property type="term" value="P:amino acid metabolic process"/>
    <property type="evidence" value="ECO:0000318"/>
    <property type="project" value="GO_Central"/>
</dbReference>
<dbReference type="GO" id="GO:0042823">
    <property type="term" value="P:pyridoxal phosphate biosynthetic process"/>
    <property type="evidence" value="ECO:0000318"/>
    <property type="project" value="GO_Central"/>
</dbReference>
<dbReference type="GO" id="GO:0008615">
    <property type="term" value="P:pyridoxine biosynthetic process"/>
    <property type="evidence" value="ECO:0000318"/>
    <property type="project" value="GO_Central"/>
</dbReference>
<dbReference type="CDD" id="cd04727">
    <property type="entry name" value="pdxS"/>
    <property type="match status" value="1"/>
</dbReference>
<dbReference type="FunFam" id="3.20.20.70:FF:000001">
    <property type="entry name" value="Pyridoxine biosynthesis protein PDX1"/>
    <property type="match status" value="1"/>
</dbReference>
<dbReference type="Gene3D" id="3.20.20.70">
    <property type="entry name" value="Aldolase class I"/>
    <property type="match status" value="1"/>
</dbReference>
<dbReference type="HAMAP" id="MF_01824">
    <property type="entry name" value="PdxS"/>
    <property type="match status" value="1"/>
</dbReference>
<dbReference type="InterPro" id="IPR013785">
    <property type="entry name" value="Aldolase_TIM"/>
</dbReference>
<dbReference type="InterPro" id="IPR001852">
    <property type="entry name" value="PdxS/SNZ"/>
</dbReference>
<dbReference type="InterPro" id="IPR033755">
    <property type="entry name" value="PdxS/SNZ_N"/>
</dbReference>
<dbReference type="InterPro" id="IPR011060">
    <property type="entry name" value="RibuloseP-bd_barrel"/>
</dbReference>
<dbReference type="NCBIfam" id="NF003215">
    <property type="entry name" value="PRK04180.1"/>
    <property type="match status" value="1"/>
</dbReference>
<dbReference type="NCBIfam" id="TIGR00343">
    <property type="entry name" value="pyridoxal 5'-phosphate synthase lyase subunit PdxS"/>
    <property type="match status" value="1"/>
</dbReference>
<dbReference type="PANTHER" id="PTHR31829">
    <property type="entry name" value="PYRIDOXAL 5'-PHOSPHATE SYNTHASE SUBUNIT SNZ1-RELATED"/>
    <property type="match status" value="1"/>
</dbReference>
<dbReference type="PANTHER" id="PTHR31829:SF0">
    <property type="entry name" value="PYRIDOXAL 5'-PHOSPHATE SYNTHASE SUBUNIT SNZ1-RELATED"/>
    <property type="match status" value="1"/>
</dbReference>
<dbReference type="Pfam" id="PF01680">
    <property type="entry name" value="SOR_SNZ"/>
    <property type="match status" value="1"/>
</dbReference>
<dbReference type="PIRSF" id="PIRSF029271">
    <property type="entry name" value="Pdx1"/>
    <property type="match status" value="1"/>
</dbReference>
<dbReference type="SUPFAM" id="SSF51366">
    <property type="entry name" value="Ribulose-phoshate binding barrel"/>
    <property type="match status" value="1"/>
</dbReference>
<dbReference type="PROSITE" id="PS01235">
    <property type="entry name" value="PDXS_SNZ_1"/>
    <property type="match status" value="1"/>
</dbReference>
<dbReference type="PROSITE" id="PS51129">
    <property type="entry name" value="PDXS_SNZ_2"/>
    <property type="match status" value="1"/>
</dbReference>
<comment type="function">
    <text evidence="1">Catalyzes the formation of pyridoxal 5'-phosphate from ribose 5-phosphate (RBP), glyceraldehyde 3-phosphate (G3P) and ammonia. The ammonia is provided by the PdxT subunit. Can also use ribulose 5-phosphate and dihydroxyacetone phosphate as substrates, resulting from enzyme-catalyzed isomerization of RBP and G3P, respectively.</text>
</comment>
<comment type="catalytic activity">
    <reaction evidence="1">
        <text>aldehydo-D-ribose 5-phosphate + D-glyceraldehyde 3-phosphate + L-glutamine = pyridoxal 5'-phosphate + L-glutamate + phosphate + 3 H2O + H(+)</text>
        <dbReference type="Rhea" id="RHEA:31507"/>
        <dbReference type="ChEBI" id="CHEBI:15377"/>
        <dbReference type="ChEBI" id="CHEBI:15378"/>
        <dbReference type="ChEBI" id="CHEBI:29985"/>
        <dbReference type="ChEBI" id="CHEBI:43474"/>
        <dbReference type="ChEBI" id="CHEBI:58273"/>
        <dbReference type="ChEBI" id="CHEBI:58359"/>
        <dbReference type="ChEBI" id="CHEBI:59776"/>
        <dbReference type="ChEBI" id="CHEBI:597326"/>
        <dbReference type="EC" id="4.3.3.6"/>
    </reaction>
</comment>
<comment type="pathway">
    <text evidence="1">Cofactor biosynthesis; pyridoxal 5'-phosphate biosynthesis.</text>
</comment>
<comment type="subunit">
    <text evidence="1">In the presence of PdxT, forms a dodecamer of heterodimers.</text>
</comment>
<comment type="similarity">
    <text evidence="1">Belongs to the PdxS/SNZ family.</text>
</comment>
<accession>P45293</accession>
<sequence>MAENRYELNKNLAQMLKGGVIMDVQNPEQARIAEAAGAAAVMALERIPADIRAVGGVSRMSDPKMIKEIQGAVSIPVMAKVRIGHFVEAQILEAIEIDYIDESEVLSPADNRFHVDKKEFQVPFVCGAKDLGEALRRIAEGASMIRTKGEPGTGDIVQAVRHMRMMSQEIRRIQNLREDELYVAAKDLQVPVELVQYVHKHGKLPVVNFAAGGIATPADAALMMQLGAEGVFVGSGIFKSGDPIKRASAIVKAVTNYRNPQILAQISEDLGEAMVGINENEIQILMAERGK</sequence>
<protein>
    <recommendedName>
        <fullName evidence="1">Pyridoxal 5'-phosphate synthase subunit PdxS</fullName>
        <shortName evidence="1">PLP synthase subunit PdxS</shortName>
        <ecNumber evidence="1">4.3.3.6</ecNumber>
    </recommendedName>
    <alternativeName>
        <fullName evidence="1">Pdx1</fullName>
    </alternativeName>
</protein>
<feature type="chain" id="PRO_0000109397" description="Pyridoxal 5'-phosphate synthase subunit PdxS">
    <location>
        <begin position="1"/>
        <end position="291"/>
    </location>
</feature>
<feature type="active site" description="Schiff-base intermediate with D-ribose 5-phosphate" evidence="1">
    <location>
        <position position="80"/>
    </location>
</feature>
<feature type="binding site" evidence="1">
    <location>
        <position position="23"/>
    </location>
    <ligand>
        <name>D-ribose 5-phosphate</name>
        <dbReference type="ChEBI" id="CHEBI:78346"/>
    </ligand>
</feature>
<feature type="binding site" evidence="1">
    <location>
        <position position="152"/>
    </location>
    <ligand>
        <name>D-ribose 5-phosphate</name>
        <dbReference type="ChEBI" id="CHEBI:78346"/>
    </ligand>
</feature>
<feature type="binding site" evidence="1">
    <location>
        <position position="164"/>
    </location>
    <ligand>
        <name>D-glyceraldehyde 3-phosphate</name>
        <dbReference type="ChEBI" id="CHEBI:59776"/>
    </ligand>
</feature>
<feature type="binding site" evidence="1">
    <location>
        <position position="213"/>
    </location>
    <ligand>
        <name>D-ribose 5-phosphate</name>
        <dbReference type="ChEBI" id="CHEBI:78346"/>
    </ligand>
</feature>
<feature type="binding site" evidence="1">
    <location>
        <begin position="234"/>
        <end position="235"/>
    </location>
    <ligand>
        <name>D-ribose 5-phosphate</name>
        <dbReference type="ChEBI" id="CHEBI:78346"/>
    </ligand>
</feature>
<name>PDXS_HAEIN</name>
<proteinExistence type="evidence at protein level"/>
<evidence type="ECO:0000255" key="1">
    <source>
        <dbReference type="HAMAP-Rule" id="MF_01824"/>
    </source>
</evidence>
<organism>
    <name type="scientific">Haemophilus influenzae (strain ATCC 51907 / DSM 11121 / KW20 / Rd)</name>
    <dbReference type="NCBI Taxonomy" id="71421"/>
    <lineage>
        <taxon>Bacteria</taxon>
        <taxon>Pseudomonadati</taxon>
        <taxon>Pseudomonadota</taxon>
        <taxon>Gammaproteobacteria</taxon>
        <taxon>Pasteurellales</taxon>
        <taxon>Pasteurellaceae</taxon>
        <taxon>Haemophilus</taxon>
    </lineage>
</organism>
<reference key="1">
    <citation type="journal article" date="1995" name="Science">
        <title>Whole-genome random sequencing and assembly of Haemophilus influenzae Rd.</title>
        <authorList>
            <person name="Fleischmann R.D."/>
            <person name="Adams M.D."/>
            <person name="White O."/>
            <person name="Clayton R.A."/>
            <person name="Kirkness E.F."/>
            <person name="Kerlavage A.R."/>
            <person name="Bult C.J."/>
            <person name="Tomb J.-F."/>
            <person name="Dougherty B.A."/>
            <person name="Merrick J.M."/>
            <person name="McKenney K."/>
            <person name="Sutton G.G."/>
            <person name="FitzHugh W."/>
            <person name="Fields C.A."/>
            <person name="Gocayne J.D."/>
            <person name="Scott J.D."/>
            <person name="Shirley R."/>
            <person name="Liu L.-I."/>
            <person name="Glodek A."/>
            <person name="Kelley J.M."/>
            <person name="Weidman J.F."/>
            <person name="Phillips C.A."/>
            <person name="Spriggs T."/>
            <person name="Hedblom E."/>
            <person name="Cotton M.D."/>
            <person name="Utterback T.R."/>
            <person name="Hanna M.C."/>
            <person name="Nguyen D.T."/>
            <person name="Saudek D.M."/>
            <person name="Brandon R.C."/>
            <person name="Fine L.D."/>
            <person name="Fritchman J.L."/>
            <person name="Fuhrmann J.L."/>
            <person name="Geoghagen N.S.M."/>
            <person name="Gnehm C.L."/>
            <person name="McDonald L.A."/>
            <person name="Small K.V."/>
            <person name="Fraser C.M."/>
            <person name="Smith H.O."/>
            <person name="Venter J.C."/>
        </authorList>
    </citation>
    <scope>NUCLEOTIDE SEQUENCE [LARGE SCALE GENOMIC DNA]</scope>
    <source>
        <strain>ATCC 51907 / DSM 11121 / KW20 / Rd</strain>
    </source>
</reference>
<reference key="2">
    <citation type="journal article" date="2000" name="Electrophoresis">
        <title>Two-dimensional map of the proteome of Haemophilus influenzae.</title>
        <authorList>
            <person name="Langen H."/>
            <person name="Takacs B."/>
            <person name="Evers S."/>
            <person name="Berndt P."/>
            <person name="Lahm H.W."/>
            <person name="Wipf B."/>
            <person name="Gray C."/>
            <person name="Fountoulakis M."/>
        </authorList>
    </citation>
    <scope>IDENTIFICATION BY MASS SPECTROMETRY</scope>
    <source>
        <strain>ATCC 51907 / DSM 11121 / KW20 / Rd</strain>
    </source>
</reference>
<keyword id="KW-0456">Lyase</keyword>
<keyword id="KW-0663">Pyridoxal phosphate</keyword>
<keyword id="KW-1185">Reference proteome</keyword>
<keyword id="KW-0704">Schiff base</keyword>
<gene>
    <name evidence="1" type="primary">pdxS</name>
    <name type="ordered locus">HI_1647</name>
</gene>